<dbReference type="EMBL" id="AF392445">
    <property type="protein sequence ID" value="AAL40658.1"/>
    <property type="molecule type" value="mRNA"/>
</dbReference>
<dbReference type="EMBL" id="AY178997">
    <property type="protein sequence ID" value="AAO20108.1"/>
    <property type="molecule type" value="mRNA"/>
</dbReference>
<dbReference type="EMBL" id="AK022554">
    <property type="protein sequence ID" value="BAB14096.1"/>
    <property type="molecule type" value="mRNA"/>
</dbReference>
<dbReference type="EMBL" id="AK027535">
    <property type="protein sequence ID" value="BAB55184.1"/>
    <property type="molecule type" value="mRNA"/>
</dbReference>
<dbReference type="EMBL" id="AK027707">
    <property type="protein sequence ID" value="BAB55312.1"/>
    <property type="molecule type" value="mRNA"/>
</dbReference>
<dbReference type="EMBL" id="AK056617">
    <property type="protein sequence ID" value="BAG51766.1"/>
    <property type="molecule type" value="mRNA"/>
</dbReference>
<dbReference type="EMBL" id="AK091703">
    <property type="protein sequence ID" value="BAC03727.1"/>
    <property type="molecule type" value="mRNA"/>
</dbReference>
<dbReference type="EMBL" id="CR457288">
    <property type="protein sequence ID" value="CAG33569.1"/>
    <property type="molecule type" value="mRNA"/>
</dbReference>
<dbReference type="EMBL" id="AL050343">
    <property type="status" value="NOT_ANNOTATED_CDS"/>
    <property type="molecule type" value="Genomic_DNA"/>
</dbReference>
<dbReference type="EMBL" id="AL772260">
    <property type="status" value="NOT_ANNOTATED_CDS"/>
    <property type="molecule type" value="Genomic_DNA"/>
</dbReference>
<dbReference type="EMBL" id="AL831767">
    <property type="status" value="NOT_ANNOTATED_CDS"/>
    <property type="molecule type" value="Genomic_DNA"/>
</dbReference>
<dbReference type="EMBL" id="CH471059">
    <property type="protein sequence ID" value="EAX06810.1"/>
    <property type="molecule type" value="Genomic_DNA"/>
</dbReference>
<dbReference type="EMBL" id="CH471059">
    <property type="protein sequence ID" value="EAX06813.1"/>
    <property type="molecule type" value="Genomic_DNA"/>
</dbReference>
<dbReference type="EMBL" id="CH471059">
    <property type="protein sequence ID" value="EAX06816.1"/>
    <property type="molecule type" value="Genomic_DNA"/>
</dbReference>
<dbReference type="EMBL" id="CH471059">
    <property type="protein sequence ID" value="EAX06819.1"/>
    <property type="molecule type" value="Genomic_DNA"/>
</dbReference>
<dbReference type="EMBL" id="CH471059">
    <property type="protein sequence ID" value="EAX06817.1"/>
    <property type="molecule type" value="Genomic_DNA"/>
</dbReference>
<dbReference type="EMBL" id="BC025978">
    <property type="protein sequence ID" value="AAH25978.1"/>
    <property type="molecule type" value="mRNA"/>
</dbReference>
<dbReference type="CCDS" id="CCDS41332.3">
    <molecule id="Q96SU4-1"/>
</dbReference>
<dbReference type="CCDS" id="CCDS41333.2">
    <molecule id="Q96SU4-7"/>
</dbReference>
<dbReference type="CCDS" id="CCDS41334.1">
    <molecule id="Q96SU4-5"/>
</dbReference>
<dbReference type="CCDS" id="CCDS44145.1">
    <molecule id="Q96SU4-6"/>
</dbReference>
<dbReference type="CCDS" id="CCDS55598.1">
    <molecule id="Q96SU4-2"/>
</dbReference>
<dbReference type="CCDS" id="CCDS558.1">
    <molecule id="Q96SU4-3"/>
</dbReference>
<dbReference type="CCDS" id="CCDS81322.1">
    <molecule id="Q96SU4-4"/>
</dbReference>
<dbReference type="RefSeq" id="NP_001317509.1">
    <molecule id="Q96SU4-4"/>
    <property type="nucleotide sequence ID" value="NM_001330580.2"/>
</dbReference>
<dbReference type="RefSeq" id="NP_078862.4">
    <molecule id="Q96SU4-1"/>
    <property type="nucleotide sequence ID" value="NM_024586.5"/>
</dbReference>
<dbReference type="RefSeq" id="NP_683702.1">
    <molecule id="Q96SU4-5"/>
    <property type="nucleotide sequence ID" value="NM_148904.4"/>
</dbReference>
<dbReference type="RefSeq" id="NP_683703.1">
    <molecule id="Q96SU4-5"/>
    <property type="nucleotide sequence ID" value="NM_148905.4"/>
</dbReference>
<dbReference type="RefSeq" id="NP_683704.2">
    <molecule id="Q96SU4-7"/>
    <property type="nucleotide sequence ID" value="NM_148906.3"/>
</dbReference>
<dbReference type="RefSeq" id="NP_683705.1">
    <molecule id="Q96SU4-3"/>
    <property type="nucleotide sequence ID" value="NM_148907.3"/>
</dbReference>
<dbReference type="RefSeq" id="NP_683706.3">
    <molecule id="Q96SU4-2"/>
    <property type="nucleotide sequence ID" value="NM_148908.4"/>
</dbReference>
<dbReference type="RefSeq" id="NP_683707.3">
    <molecule id="Q96SU4-6"/>
    <property type="nucleotide sequence ID" value="NM_148909.4"/>
</dbReference>
<dbReference type="RefSeq" id="XP_006710386.1">
    <property type="nucleotide sequence ID" value="XM_006710323.2"/>
</dbReference>
<dbReference type="RefSeq" id="XP_006710387.1">
    <property type="nucleotide sequence ID" value="XM_006710324.3"/>
</dbReference>
<dbReference type="RefSeq" id="XP_006710388.1">
    <property type="nucleotide sequence ID" value="XM_006710325.3"/>
</dbReference>
<dbReference type="RefSeq" id="XP_006710389.1">
    <property type="nucleotide sequence ID" value="XM_006710326.2"/>
</dbReference>
<dbReference type="RefSeq" id="XP_011538905.1">
    <property type="nucleotide sequence ID" value="XM_011540603.2"/>
</dbReference>
<dbReference type="RefSeq" id="XP_011538906.1">
    <property type="nucleotide sequence ID" value="XM_011540604.2"/>
</dbReference>
<dbReference type="RefSeq" id="XP_016855708.1">
    <property type="nucleotide sequence ID" value="XM_017000219.1"/>
</dbReference>
<dbReference type="RefSeq" id="XP_016855709.1">
    <property type="nucleotide sequence ID" value="XM_017000220.1"/>
</dbReference>
<dbReference type="RefSeq" id="XP_016855710.1">
    <property type="nucleotide sequence ID" value="XM_017000221.1"/>
</dbReference>
<dbReference type="SMR" id="Q96SU4"/>
<dbReference type="BioGRID" id="125384">
    <property type="interactions" value="105"/>
</dbReference>
<dbReference type="ComplexPortal" id="CPX-8167">
    <property type="entry name" value="OSBPL9-OSBPL10 oxysterol-binding protein-related complex"/>
</dbReference>
<dbReference type="ComplexPortal" id="CPX-8168">
    <property type="entry name" value="OSBPL9-OSBPL11 oxysterol-binding protein-related complex"/>
</dbReference>
<dbReference type="ELM" id="Q96SU4"/>
<dbReference type="FunCoup" id="Q96SU4">
    <property type="interactions" value="3795"/>
</dbReference>
<dbReference type="IntAct" id="Q96SU4">
    <property type="interactions" value="42"/>
</dbReference>
<dbReference type="MINT" id="Q96SU4"/>
<dbReference type="STRING" id="9606.ENSP00000412733"/>
<dbReference type="GlyGen" id="Q96SU4">
    <property type="glycosylation" value="1 site, 1 O-linked glycan (1 site)"/>
</dbReference>
<dbReference type="iPTMnet" id="Q96SU4"/>
<dbReference type="PhosphoSitePlus" id="Q96SU4"/>
<dbReference type="BioMuta" id="OSBPL9"/>
<dbReference type="DMDM" id="20139075"/>
<dbReference type="jPOST" id="Q96SU4"/>
<dbReference type="MassIVE" id="Q96SU4"/>
<dbReference type="PaxDb" id="9606-ENSP00000412733"/>
<dbReference type="PeptideAtlas" id="Q96SU4"/>
<dbReference type="ProteomicsDB" id="78150">
    <molecule id="Q96SU4-1"/>
</dbReference>
<dbReference type="ProteomicsDB" id="78151">
    <molecule id="Q96SU4-2"/>
</dbReference>
<dbReference type="ProteomicsDB" id="78152">
    <molecule id="Q96SU4-3"/>
</dbReference>
<dbReference type="ProteomicsDB" id="78153">
    <molecule id="Q96SU4-4"/>
</dbReference>
<dbReference type="ProteomicsDB" id="78154">
    <molecule id="Q96SU4-5"/>
</dbReference>
<dbReference type="ProteomicsDB" id="78155">
    <molecule id="Q96SU4-6"/>
</dbReference>
<dbReference type="ProteomicsDB" id="78156">
    <molecule id="Q96SU4-7"/>
</dbReference>
<dbReference type="Pumba" id="Q96SU4"/>
<dbReference type="Antibodypedia" id="18985">
    <property type="antibodies" value="137 antibodies from 32 providers"/>
</dbReference>
<dbReference type="DNASU" id="114883"/>
<dbReference type="Ensembl" id="ENST00000361556.9">
    <molecule id="Q96SU4-3"/>
    <property type="protein sequence ID" value="ENSP00000354970.5"/>
    <property type="gene ID" value="ENSG00000117859.19"/>
</dbReference>
<dbReference type="Ensembl" id="ENST00000371714.5">
    <molecule id="Q96SU4-2"/>
    <property type="protein sequence ID" value="ENSP00000360779.1"/>
    <property type="gene ID" value="ENSG00000117859.19"/>
</dbReference>
<dbReference type="Ensembl" id="ENST00000428468.6">
    <molecule id="Q96SU4-1"/>
    <property type="protein sequence ID" value="ENSP00000407168.1"/>
    <property type="gene ID" value="ENSG00000117859.19"/>
</dbReference>
<dbReference type="Ensembl" id="ENST00000447887.5">
    <molecule id="Q96SU4-6"/>
    <property type="protein sequence ID" value="ENSP00000412733.1"/>
    <property type="gene ID" value="ENSG00000117859.19"/>
</dbReference>
<dbReference type="Ensembl" id="ENST00000453295.5">
    <molecule id="Q96SU4-7"/>
    <property type="protein sequence ID" value="ENSP00000413263.1"/>
    <property type="gene ID" value="ENSG00000117859.19"/>
</dbReference>
<dbReference type="Ensembl" id="ENST00000462759.5">
    <molecule id="Q96SU4-5"/>
    <property type="protein sequence ID" value="ENSP00000433279.1"/>
    <property type="gene ID" value="ENSG00000117859.19"/>
</dbReference>
<dbReference type="Ensembl" id="ENST00000486942.5">
    <molecule id="Q96SU4-5"/>
    <property type="protein sequence ID" value="ENSP00000431980.1"/>
    <property type="gene ID" value="ENSG00000117859.19"/>
</dbReference>
<dbReference type="Ensembl" id="ENST00000531828.5">
    <molecule id="Q96SU4-4"/>
    <property type="protein sequence ID" value="ENSP00000433083.1"/>
    <property type="gene ID" value="ENSG00000117859.19"/>
</dbReference>
<dbReference type="GeneID" id="114883"/>
<dbReference type="KEGG" id="hsa:114883"/>
<dbReference type="MANE-Select" id="ENST00000428468.6">
    <property type="protein sequence ID" value="ENSP00000407168.1"/>
    <property type="RefSeq nucleotide sequence ID" value="NM_024586.6"/>
    <property type="RefSeq protein sequence ID" value="NP_078862.4"/>
</dbReference>
<dbReference type="UCSC" id="uc001cst.5">
    <molecule id="Q96SU4-1"/>
    <property type="organism name" value="human"/>
</dbReference>
<dbReference type="AGR" id="HGNC:16386"/>
<dbReference type="CTD" id="114883"/>
<dbReference type="DisGeNET" id="114883"/>
<dbReference type="GeneCards" id="OSBPL9"/>
<dbReference type="HGNC" id="HGNC:16386">
    <property type="gene designation" value="OSBPL9"/>
</dbReference>
<dbReference type="HPA" id="ENSG00000117859">
    <property type="expression patterns" value="Low tissue specificity"/>
</dbReference>
<dbReference type="MIM" id="606737">
    <property type="type" value="gene"/>
</dbReference>
<dbReference type="neXtProt" id="NX_Q96SU4"/>
<dbReference type="OpenTargets" id="ENSG00000117859"/>
<dbReference type="PharmGKB" id="PA32833"/>
<dbReference type="VEuPathDB" id="HostDB:ENSG00000117859"/>
<dbReference type="eggNOG" id="KOG2210">
    <property type="taxonomic scope" value="Eukaryota"/>
</dbReference>
<dbReference type="GeneTree" id="ENSGT00940000154690"/>
<dbReference type="HOGENOM" id="CLU_012334_3_0_1"/>
<dbReference type="InParanoid" id="Q96SU4"/>
<dbReference type="OMA" id="CTIEQKQ"/>
<dbReference type="OrthoDB" id="48057at2759"/>
<dbReference type="PAN-GO" id="Q96SU4">
    <property type="GO annotations" value="5 GO annotations based on evolutionary models"/>
</dbReference>
<dbReference type="PhylomeDB" id="Q96SU4"/>
<dbReference type="TreeFam" id="TF312807"/>
<dbReference type="PathwayCommons" id="Q96SU4"/>
<dbReference type="Reactome" id="R-HSA-192105">
    <property type="pathway name" value="Synthesis of bile acids and bile salts"/>
</dbReference>
<dbReference type="SignaLink" id="Q96SU4"/>
<dbReference type="BioGRID-ORCS" id="114883">
    <property type="hits" value="31 hits in 1161 CRISPR screens"/>
</dbReference>
<dbReference type="ChiTaRS" id="OSBPL9">
    <property type="organism name" value="human"/>
</dbReference>
<dbReference type="GeneWiki" id="OSBPL9"/>
<dbReference type="GenomeRNAi" id="114883"/>
<dbReference type="Pharos" id="Q96SU4">
    <property type="development level" value="Tbio"/>
</dbReference>
<dbReference type="PRO" id="PR:Q96SU4"/>
<dbReference type="Proteomes" id="UP000005640">
    <property type="component" value="Chromosome 1"/>
</dbReference>
<dbReference type="RNAct" id="Q96SU4">
    <property type="molecule type" value="protein"/>
</dbReference>
<dbReference type="Bgee" id="ENSG00000117859">
    <property type="expression patterns" value="Expressed in calcaneal tendon and 208 other cell types or tissues"/>
</dbReference>
<dbReference type="ExpressionAtlas" id="Q96SU4">
    <property type="expression patterns" value="baseline and differential"/>
</dbReference>
<dbReference type="GO" id="GO:0005829">
    <property type="term" value="C:cytosol"/>
    <property type="evidence" value="ECO:0000314"/>
    <property type="project" value="HPA"/>
</dbReference>
<dbReference type="GO" id="GO:0005794">
    <property type="term" value="C:Golgi apparatus"/>
    <property type="evidence" value="ECO:0000314"/>
    <property type="project" value="HPA"/>
</dbReference>
<dbReference type="GO" id="GO:0043231">
    <property type="term" value="C:intracellular membrane-bounded organelle"/>
    <property type="evidence" value="ECO:0000314"/>
    <property type="project" value="HPA"/>
</dbReference>
<dbReference type="GO" id="GO:0031902">
    <property type="term" value="C:late endosome membrane"/>
    <property type="evidence" value="ECO:0007669"/>
    <property type="project" value="UniProtKB-SubCell"/>
</dbReference>
<dbReference type="GO" id="GO:0016020">
    <property type="term" value="C:membrane"/>
    <property type="evidence" value="ECO:0000318"/>
    <property type="project" value="GO_Central"/>
</dbReference>
<dbReference type="GO" id="GO:0032934">
    <property type="term" value="F:sterol binding"/>
    <property type="evidence" value="ECO:0000318"/>
    <property type="project" value="GO_Central"/>
</dbReference>
<dbReference type="GO" id="GO:0120015">
    <property type="term" value="F:sterol transfer activity"/>
    <property type="evidence" value="ECO:0000304"/>
    <property type="project" value="Reactome"/>
</dbReference>
<dbReference type="GO" id="GO:0006699">
    <property type="term" value="P:bile acid biosynthetic process"/>
    <property type="evidence" value="ECO:0000304"/>
    <property type="project" value="Reactome"/>
</dbReference>
<dbReference type="CDD" id="cd13290">
    <property type="entry name" value="PH_ORP9"/>
    <property type="match status" value="1"/>
</dbReference>
<dbReference type="FunFam" id="1.10.287.2720:FF:000001">
    <property type="entry name" value="Oxysterol-binding OBPalpha"/>
    <property type="match status" value="1"/>
</dbReference>
<dbReference type="FunFam" id="2.30.29.30:FF:000089">
    <property type="entry name" value="Oxysterol-binding protein"/>
    <property type="match status" value="1"/>
</dbReference>
<dbReference type="FunFam" id="2.40.160.120:FF:000002">
    <property type="entry name" value="Oxysterol-binding protein"/>
    <property type="match status" value="1"/>
</dbReference>
<dbReference type="FunFam" id="3.30.70.3490:FF:000001">
    <property type="entry name" value="Oxysterol-binding protein"/>
    <property type="match status" value="1"/>
</dbReference>
<dbReference type="Gene3D" id="1.10.287.2720">
    <property type="match status" value="1"/>
</dbReference>
<dbReference type="Gene3D" id="2.40.160.120">
    <property type="match status" value="1"/>
</dbReference>
<dbReference type="Gene3D" id="3.30.70.3490">
    <property type="match status" value="1"/>
</dbReference>
<dbReference type="Gene3D" id="2.30.29.30">
    <property type="entry name" value="Pleckstrin-homology domain (PH domain)/Phosphotyrosine-binding domain (PTB)"/>
    <property type="match status" value="1"/>
</dbReference>
<dbReference type="InterPro" id="IPR037239">
    <property type="entry name" value="OSBP_sf"/>
</dbReference>
<dbReference type="InterPro" id="IPR000648">
    <property type="entry name" value="Oxysterol-bd"/>
</dbReference>
<dbReference type="InterPro" id="IPR018494">
    <property type="entry name" value="Oxysterol-bd_CS"/>
</dbReference>
<dbReference type="InterPro" id="IPR011993">
    <property type="entry name" value="PH-like_dom_sf"/>
</dbReference>
<dbReference type="InterPro" id="IPR001849">
    <property type="entry name" value="PH_domain"/>
</dbReference>
<dbReference type="PANTHER" id="PTHR10972">
    <property type="entry name" value="OXYSTEROL-BINDING PROTEIN-RELATED"/>
    <property type="match status" value="1"/>
</dbReference>
<dbReference type="PANTHER" id="PTHR10972:SF200">
    <property type="entry name" value="OXYSTEROL-BINDING PROTEIN-RELATED PROTEIN 9"/>
    <property type="match status" value="1"/>
</dbReference>
<dbReference type="Pfam" id="PF01237">
    <property type="entry name" value="Oxysterol_BP"/>
    <property type="match status" value="2"/>
</dbReference>
<dbReference type="Pfam" id="PF00169">
    <property type="entry name" value="PH"/>
    <property type="match status" value="1"/>
</dbReference>
<dbReference type="SMART" id="SM00233">
    <property type="entry name" value="PH"/>
    <property type="match status" value="1"/>
</dbReference>
<dbReference type="SUPFAM" id="SSF144000">
    <property type="entry name" value="Oxysterol-binding protein-like"/>
    <property type="match status" value="1"/>
</dbReference>
<dbReference type="SUPFAM" id="SSF50729">
    <property type="entry name" value="PH domain-like"/>
    <property type="match status" value="1"/>
</dbReference>
<dbReference type="PROSITE" id="PS01013">
    <property type="entry name" value="OSBP"/>
    <property type="match status" value="1"/>
</dbReference>
<dbReference type="PROSITE" id="PS50003">
    <property type="entry name" value="PH_DOMAIN"/>
    <property type="match status" value="1"/>
</dbReference>
<evidence type="ECO:0000255" key="1">
    <source>
        <dbReference type="PROSITE-ProRule" id="PRU00145"/>
    </source>
</evidence>
<evidence type="ECO:0000256" key="2">
    <source>
        <dbReference type="SAM" id="MobiDB-lite"/>
    </source>
</evidence>
<evidence type="ECO:0000269" key="3">
    <source>
    </source>
</evidence>
<evidence type="ECO:0000269" key="4">
    <source>
    </source>
</evidence>
<evidence type="ECO:0000269" key="5">
    <source>
    </source>
</evidence>
<evidence type="ECO:0000269" key="6">
    <source>
    </source>
</evidence>
<evidence type="ECO:0000269" key="7">
    <source>
    </source>
</evidence>
<evidence type="ECO:0000303" key="8">
    <source>
    </source>
</evidence>
<evidence type="ECO:0000303" key="9">
    <source>
    </source>
</evidence>
<evidence type="ECO:0000303" key="10">
    <source ref="2"/>
</evidence>
<evidence type="ECO:0000303" key="11">
    <source ref="4"/>
</evidence>
<evidence type="ECO:0000305" key="12"/>
<evidence type="ECO:0007744" key="13">
    <source>
    </source>
</evidence>
<evidence type="ECO:0007744" key="14">
    <source>
    </source>
</evidence>
<evidence type="ECO:0007744" key="15">
    <source>
    </source>
</evidence>
<evidence type="ECO:0007744" key="16">
    <source>
    </source>
</evidence>
<name>OSBL9_HUMAN</name>
<gene>
    <name type="primary">OSBPL9</name>
    <name type="synonym">ORP9</name>
    <name type="synonym">OSBP4</name>
</gene>
<accession>Q96SU4</accession>
<accession>B1AKJ8</accession>
<accession>B3KPQ4</accession>
<accession>D3DQ31</accession>
<accession>Q5TFC0</accession>
<accession>Q6IA67</accession>
<accession>Q86YQ3</accession>
<accession>Q8NB17</accession>
<accession>Q8TAS8</accession>
<accession>Q96SK4</accession>
<accession>Q9H9X2</accession>
<feature type="initiator methionine" description="Removed" evidence="13 14">
    <location>
        <position position="1"/>
    </location>
</feature>
<feature type="chain" id="PRO_0000100379" description="Oxysterol-binding protein-related protein 9">
    <location>
        <begin position="2"/>
        <end position="736"/>
    </location>
</feature>
<feature type="domain" description="PH" evidence="1">
    <location>
        <begin position="2"/>
        <end position="99"/>
    </location>
</feature>
<feature type="region of interest" description="Disordered" evidence="2">
    <location>
        <begin position="231"/>
        <end position="367"/>
    </location>
</feature>
<feature type="compositionally biased region" description="Low complexity" evidence="2">
    <location>
        <begin position="253"/>
        <end position="290"/>
    </location>
</feature>
<feature type="compositionally biased region" description="Polar residues" evidence="2">
    <location>
        <begin position="314"/>
        <end position="329"/>
    </location>
</feature>
<feature type="compositionally biased region" description="Polar residues" evidence="2">
    <location>
        <begin position="336"/>
        <end position="347"/>
    </location>
</feature>
<feature type="modified residue" description="N-acetylalanine" evidence="13 14">
    <location>
        <position position="2"/>
    </location>
</feature>
<feature type="modified residue" description="Phosphoserine" evidence="16">
    <location>
        <position position="306"/>
    </location>
</feature>
<feature type="modified residue" description="Phosphoserine" evidence="15">
    <location>
        <position position="324"/>
    </location>
</feature>
<feature type="modified residue" description="Phosphoserine" evidence="15">
    <location>
        <position position="325"/>
    </location>
</feature>
<feature type="modified residue" description="Phosphoserine" evidence="15">
    <location>
        <position position="326"/>
    </location>
</feature>
<feature type="modified residue" description="Phosphoserine" evidence="15">
    <location>
        <position position="329"/>
    </location>
</feature>
<feature type="modified residue" description="Phosphoserine" evidence="15">
    <location>
        <position position="611"/>
    </location>
</feature>
<feature type="splice variant" id="VSP_036779" description="In isoform 4 and isoform 5." evidence="8 9 11">
    <location>
        <begin position="1"/>
        <end position="165"/>
    </location>
</feature>
<feature type="splice variant" id="VSP_036780" description="In isoform 3." evidence="8">
    <location>
        <begin position="1"/>
        <end position="97"/>
    </location>
</feature>
<feature type="splice variant" id="VSP_043630" description="In isoform 7." evidence="10">
    <location>
        <begin position="38"/>
        <end position="54"/>
    </location>
</feature>
<feature type="splice variant" id="VSP_036781" description="In isoform 3." evidence="8">
    <original>ILRHTLQLQ</original>
    <variation>MAFLLATCG</variation>
    <location>
        <begin position="98"/>
        <end position="106"/>
    </location>
</feature>
<feature type="splice variant" id="VSP_043631" description="In isoform 6." evidence="8">
    <original>Q</original>
    <variation>QISTTLAFFQSSGISPVLEFSKII</variation>
    <location>
        <position position="106"/>
    </location>
</feature>
<feature type="splice variant" id="VSP_003782" description="In isoform 2, isoform 3, isoform 5 and isoform 6." evidence="8 9">
    <location>
        <begin position="182"/>
        <end position="194"/>
    </location>
</feature>
<feature type="sequence variant" id="VAR_069380" description="In dbSNP:rs140080386." evidence="6">
    <original>P</original>
    <variation>L</variation>
    <location>
        <position position="266"/>
    </location>
</feature>
<feature type="sequence conflict" description="In Ref. 3; BAC03727." evidence="12" ref="3">
    <original>F</original>
    <variation>L</variation>
    <location>
        <position position="295"/>
    </location>
</feature>
<feature type="sequence conflict" description="In Ref. 3; BAB55312." evidence="12" ref="3">
    <original>K</original>
    <variation>R</variation>
    <location>
        <position position="735"/>
    </location>
</feature>
<comment type="function">
    <text evidence="7">Interacts with OSBPL11 to function as lipid transfer proteins (PubMed:39106189). Together they form a heterodimer that localizes at the ER-trans-Golgi membrane contact sites, and exchanges phosphatidylserine (1,2-diacyl-sn-glycero-3-phospho-L-serine, PS) for phosphatidylinositol-4-phosphate (1,2-diacyl-sn-glycero-3-phospho-(1D-myo-inositol 4-phosphate), PI(4)P) between the two organelles, a step that is critical for sphingomyelin synthesis in the Golgi complex (PubMed:39106189).</text>
</comment>
<comment type="catalytic activity">
    <reaction evidence="7">
        <text>a 1,2-diacyl-sn-glycero-3-phospho-(1D-myo-inositol 4-phosphate)(out) + a 1,2-diacyl-sn-glycero-3-phospho-L-serine(in) = a 1,2-diacyl-sn-glycero-3-phospho-(1D-myo-inositol 4-phosphate)(in) + a 1,2-diacyl-sn-glycero-3-phospho-L-serine(out)</text>
        <dbReference type="Rhea" id="RHEA:81667"/>
        <dbReference type="ChEBI" id="CHEBI:57262"/>
        <dbReference type="ChEBI" id="CHEBI:58178"/>
    </reaction>
</comment>
<comment type="subunit">
    <text evidence="4 5 7">Heterodimer with OSBPL11 (PubMed:20599956, PubMed:39106189). Interacts with OSBPL10 (PubMed:22906437).</text>
</comment>
<comment type="interaction">
    <interactant intactId="EBI-2511368">
        <id>Q96SU4</id>
    </interactant>
    <interactant intactId="EBI-2848814">
        <id>Q92685</id>
        <label>ALG3</label>
    </interactant>
    <organismsDiffer>false</organismsDiffer>
    <experiments>2</experiments>
</comment>
<comment type="interaction">
    <interactant intactId="EBI-2511368">
        <id>Q96SU4</id>
    </interactant>
    <interactant intactId="EBI-2511286">
        <id>Q9BXB5</id>
        <label>OSBPL10</label>
    </interactant>
    <organismsDiffer>false</organismsDiffer>
    <experiments>3</experiments>
</comment>
<comment type="interaction">
    <interactant intactId="EBI-2511368">
        <id>Q96SU4</id>
    </interactant>
    <interactant intactId="EBI-2514786">
        <id>Q9BXB4</id>
        <label>OSBPL11</label>
    </interactant>
    <organismsDiffer>false</organismsDiffer>
    <experiments>8</experiments>
</comment>
<comment type="subcellular location">
    <subcellularLocation>
        <location evidence="4">Late endosome membrane</location>
    </subcellularLocation>
    <subcellularLocation>
        <location evidence="4">Golgi apparatus</location>
        <location evidence="4">trans-Golgi network membrane</location>
    </subcellularLocation>
    <text>Localizes at the Golgi-late endosome interface.</text>
</comment>
<comment type="alternative products">
    <event type="alternative splicing"/>
    <isoform>
        <id>Q96SU4-1</id>
        <name>1</name>
        <sequence type="displayed"/>
    </isoform>
    <isoform>
        <id>Q96SU4-2</id>
        <name>2</name>
        <sequence type="described" ref="VSP_003782"/>
    </isoform>
    <isoform>
        <id>Q96SU4-3</id>
        <name>3</name>
        <sequence type="described" ref="VSP_036780 VSP_036781 VSP_003782"/>
    </isoform>
    <isoform>
        <id>Q96SU4-4</id>
        <name>4</name>
        <sequence type="described" ref="VSP_036779"/>
    </isoform>
    <isoform>
        <id>Q96SU4-5</id>
        <name>5</name>
        <sequence type="described" ref="VSP_036779 VSP_003782"/>
    </isoform>
    <isoform>
        <id>Q96SU4-6</id>
        <name>6</name>
        <sequence type="described" ref="VSP_043631 VSP_003782"/>
    </isoform>
    <isoform>
        <id>Q96SU4-7</id>
        <name>7</name>
        <sequence type="described" ref="VSP_043630"/>
    </isoform>
</comment>
<comment type="tissue specificity">
    <text evidence="3">Widely expressed.</text>
</comment>
<comment type="similarity">
    <text evidence="12">Belongs to the OSBP family.</text>
</comment>
<reference key="1">
    <citation type="journal article" date="2001" name="Genomics">
        <title>A family of 12 human genes containing oxysterol-binding domains.</title>
        <authorList>
            <person name="Jaworski C.J."/>
            <person name="Moreira E."/>
            <person name="Li A."/>
            <person name="Lee R."/>
            <person name="Rodriguez I.R."/>
        </authorList>
    </citation>
    <scope>NUCLEOTIDE SEQUENCE [MRNA] (ISOFORM 1)</scope>
    <scope>TISSUE SPECIFICITY</scope>
</reference>
<reference key="2">
    <citation type="submission" date="2002-11" db="EMBL/GenBank/DDBJ databases">
        <authorList>
            <person name="Hao D.C."/>
            <person name="Hooi S.C."/>
        </authorList>
    </citation>
    <scope>NUCLEOTIDE SEQUENCE [MRNA] (ISOFORM 7)</scope>
</reference>
<reference key="3">
    <citation type="journal article" date="2004" name="Nat. Genet.">
        <title>Complete sequencing and characterization of 21,243 full-length human cDNAs.</title>
        <authorList>
            <person name="Ota T."/>
            <person name="Suzuki Y."/>
            <person name="Nishikawa T."/>
            <person name="Otsuki T."/>
            <person name="Sugiyama T."/>
            <person name="Irie R."/>
            <person name="Wakamatsu A."/>
            <person name="Hayashi K."/>
            <person name="Sato H."/>
            <person name="Nagai K."/>
            <person name="Kimura K."/>
            <person name="Makita H."/>
            <person name="Sekine M."/>
            <person name="Obayashi M."/>
            <person name="Nishi T."/>
            <person name="Shibahara T."/>
            <person name="Tanaka T."/>
            <person name="Ishii S."/>
            <person name="Yamamoto J."/>
            <person name="Saito K."/>
            <person name="Kawai Y."/>
            <person name="Isono Y."/>
            <person name="Nakamura Y."/>
            <person name="Nagahari K."/>
            <person name="Murakami K."/>
            <person name="Yasuda T."/>
            <person name="Iwayanagi T."/>
            <person name="Wagatsuma M."/>
            <person name="Shiratori A."/>
            <person name="Sudo H."/>
            <person name="Hosoiri T."/>
            <person name="Kaku Y."/>
            <person name="Kodaira H."/>
            <person name="Kondo H."/>
            <person name="Sugawara M."/>
            <person name="Takahashi M."/>
            <person name="Kanda K."/>
            <person name="Yokoi T."/>
            <person name="Furuya T."/>
            <person name="Kikkawa E."/>
            <person name="Omura Y."/>
            <person name="Abe K."/>
            <person name="Kamihara K."/>
            <person name="Katsuta N."/>
            <person name="Sato K."/>
            <person name="Tanikawa M."/>
            <person name="Yamazaki M."/>
            <person name="Ninomiya K."/>
            <person name="Ishibashi T."/>
            <person name="Yamashita H."/>
            <person name="Murakawa K."/>
            <person name="Fujimori K."/>
            <person name="Tanai H."/>
            <person name="Kimata M."/>
            <person name="Watanabe M."/>
            <person name="Hiraoka S."/>
            <person name="Chiba Y."/>
            <person name="Ishida S."/>
            <person name="Ono Y."/>
            <person name="Takiguchi S."/>
            <person name="Watanabe S."/>
            <person name="Yosida M."/>
            <person name="Hotuta T."/>
            <person name="Kusano J."/>
            <person name="Kanehori K."/>
            <person name="Takahashi-Fujii A."/>
            <person name="Hara H."/>
            <person name="Tanase T.-O."/>
            <person name="Nomura Y."/>
            <person name="Togiya S."/>
            <person name="Komai F."/>
            <person name="Hara R."/>
            <person name="Takeuchi K."/>
            <person name="Arita M."/>
            <person name="Imose N."/>
            <person name="Musashino K."/>
            <person name="Yuuki H."/>
            <person name="Oshima A."/>
            <person name="Sasaki N."/>
            <person name="Aotsuka S."/>
            <person name="Yoshikawa Y."/>
            <person name="Matsunawa H."/>
            <person name="Ichihara T."/>
            <person name="Shiohata N."/>
            <person name="Sano S."/>
            <person name="Moriya S."/>
            <person name="Momiyama H."/>
            <person name="Satoh N."/>
            <person name="Takami S."/>
            <person name="Terashima Y."/>
            <person name="Suzuki O."/>
            <person name="Nakagawa S."/>
            <person name="Senoh A."/>
            <person name="Mizoguchi H."/>
            <person name="Goto Y."/>
            <person name="Shimizu F."/>
            <person name="Wakebe H."/>
            <person name="Hishigaki H."/>
            <person name="Watanabe T."/>
            <person name="Sugiyama A."/>
            <person name="Takemoto M."/>
            <person name="Kawakami B."/>
            <person name="Yamazaki M."/>
            <person name="Watanabe K."/>
            <person name="Kumagai A."/>
            <person name="Itakura S."/>
            <person name="Fukuzumi Y."/>
            <person name="Fujimori Y."/>
            <person name="Komiyama M."/>
            <person name="Tashiro H."/>
            <person name="Tanigami A."/>
            <person name="Fujiwara T."/>
            <person name="Ono T."/>
            <person name="Yamada K."/>
            <person name="Fujii Y."/>
            <person name="Ozaki K."/>
            <person name="Hirao M."/>
            <person name="Ohmori Y."/>
            <person name="Kawabata A."/>
            <person name="Hikiji T."/>
            <person name="Kobatake N."/>
            <person name="Inagaki H."/>
            <person name="Ikema Y."/>
            <person name="Okamoto S."/>
            <person name="Okitani R."/>
            <person name="Kawakami T."/>
            <person name="Noguchi S."/>
            <person name="Itoh T."/>
            <person name="Shigeta K."/>
            <person name="Senba T."/>
            <person name="Matsumura K."/>
            <person name="Nakajima Y."/>
            <person name="Mizuno T."/>
            <person name="Morinaga M."/>
            <person name="Sasaki M."/>
            <person name="Togashi T."/>
            <person name="Oyama M."/>
            <person name="Hata H."/>
            <person name="Watanabe M."/>
            <person name="Komatsu T."/>
            <person name="Mizushima-Sugano J."/>
            <person name="Satoh T."/>
            <person name="Shirai Y."/>
            <person name="Takahashi Y."/>
            <person name="Nakagawa K."/>
            <person name="Okumura K."/>
            <person name="Nagase T."/>
            <person name="Nomura N."/>
            <person name="Kikuchi H."/>
            <person name="Masuho Y."/>
            <person name="Yamashita R."/>
            <person name="Nakai K."/>
            <person name="Yada T."/>
            <person name="Nakamura Y."/>
            <person name="Ohara O."/>
            <person name="Isogai T."/>
            <person name="Sugano S."/>
        </authorList>
    </citation>
    <scope>NUCLEOTIDE SEQUENCE [LARGE SCALE MRNA] (ISOFORMS 2; 3; 4; 5 AND 6)</scope>
    <source>
        <tissue>Tongue</tissue>
    </source>
</reference>
<reference key="4">
    <citation type="submission" date="2004-06" db="EMBL/GenBank/DDBJ databases">
        <title>Cloning of human full open reading frames in Gateway(TM) system entry vector (pDONR201).</title>
        <authorList>
            <person name="Ebert L."/>
            <person name="Schick M."/>
            <person name="Neubert P."/>
            <person name="Schatten R."/>
            <person name="Henze S."/>
            <person name="Korn B."/>
        </authorList>
    </citation>
    <scope>NUCLEOTIDE SEQUENCE [LARGE SCALE MRNA] (ISOFORM 4)</scope>
</reference>
<reference key="5">
    <citation type="journal article" date="2006" name="Nature">
        <title>The DNA sequence and biological annotation of human chromosome 1.</title>
        <authorList>
            <person name="Gregory S.G."/>
            <person name="Barlow K.F."/>
            <person name="McLay K.E."/>
            <person name="Kaul R."/>
            <person name="Swarbreck D."/>
            <person name="Dunham A."/>
            <person name="Scott C.E."/>
            <person name="Howe K.L."/>
            <person name="Woodfine K."/>
            <person name="Spencer C.C.A."/>
            <person name="Jones M.C."/>
            <person name="Gillson C."/>
            <person name="Searle S."/>
            <person name="Zhou Y."/>
            <person name="Kokocinski F."/>
            <person name="McDonald L."/>
            <person name="Evans R."/>
            <person name="Phillips K."/>
            <person name="Atkinson A."/>
            <person name="Cooper R."/>
            <person name="Jones C."/>
            <person name="Hall R.E."/>
            <person name="Andrews T.D."/>
            <person name="Lloyd C."/>
            <person name="Ainscough R."/>
            <person name="Almeida J.P."/>
            <person name="Ambrose K.D."/>
            <person name="Anderson F."/>
            <person name="Andrew R.W."/>
            <person name="Ashwell R.I.S."/>
            <person name="Aubin K."/>
            <person name="Babbage A.K."/>
            <person name="Bagguley C.L."/>
            <person name="Bailey J."/>
            <person name="Beasley H."/>
            <person name="Bethel G."/>
            <person name="Bird C.P."/>
            <person name="Bray-Allen S."/>
            <person name="Brown J.Y."/>
            <person name="Brown A.J."/>
            <person name="Buckley D."/>
            <person name="Burton J."/>
            <person name="Bye J."/>
            <person name="Carder C."/>
            <person name="Chapman J.C."/>
            <person name="Clark S.Y."/>
            <person name="Clarke G."/>
            <person name="Clee C."/>
            <person name="Cobley V."/>
            <person name="Collier R.E."/>
            <person name="Corby N."/>
            <person name="Coville G.J."/>
            <person name="Davies J."/>
            <person name="Deadman R."/>
            <person name="Dunn M."/>
            <person name="Earthrowl M."/>
            <person name="Ellington A.G."/>
            <person name="Errington H."/>
            <person name="Frankish A."/>
            <person name="Frankland J."/>
            <person name="French L."/>
            <person name="Garner P."/>
            <person name="Garnett J."/>
            <person name="Gay L."/>
            <person name="Ghori M.R.J."/>
            <person name="Gibson R."/>
            <person name="Gilby L.M."/>
            <person name="Gillett W."/>
            <person name="Glithero R.J."/>
            <person name="Grafham D.V."/>
            <person name="Griffiths C."/>
            <person name="Griffiths-Jones S."/>
            <person name="Grocock R."/>
            <person name="Hammond S."/>
            <person name="Harrison E.S.I."/>
            <person name="Hart E."/>
            <person name="Haugen E."/>
            <person name="Heath P.D."/>
            <person name="Holmes S."/>
            <person name="Holt K."/>
            <person name="Howden P.J."/>
            <person name="Hunt A.R."/>
            <person name="Hunt S.E."/>
            <person name="Hunter G."/>
            <person name="Isherwood J."/>
            <person name="James R."/>
            <person name="Johnson C."/>
            <person name="Johnson D."/>
            <person name="Joy A."/>
            <person name="Kay M."/>
            <person name="Kershaw J.K."/>
            <person name="Kibukawa M."/>
            <person name="Kimberley A.M."/>
            <person name="King A."/>
            <person name="Knights A.J."/>
            <person name="Lad H."/>
            <person name="Laird G."/>
            <person name="Lawlor S."/>
            <person name="Leongamornlert D.A."/>
            <person name="Lloyd D.M."/>
            <person name="Loveland J."/>
            <person name="Lovell J."/>
            <person name="Lush M.J."/>
            <person name="Lyne R."/>
            <person name="Martin S."/>
            <person name="Mashreghi-Mohammadi M."/>
            <person name="Matthews L."/>
            <person name="Matthews N.S.W."/>
            <person name="McLaren S."/>
            <person name="Milne S."/>
            <person name="Mistry S."/>
            <person name="Moore M.J.F."/>
            <person name="Nickerson T."/>
            <person name="O'Dell C.N."/>
            <person name="Oliver K."/>
            <person name="Palmeiri A."/>
            <person name="Palmer S.A."/>
            <person name="Parker A."/>
            <person name="Patel D."/>
            <person name="Pearce A.V."/>
            <person name="Peck A.I."/>
            <person name="Pelan S."/>
            <person name="Phelps K."/>
            <person name="Phillimore B.J."/>
            <person name="Plumb R."/>
            <person name="Rajan J."/>
            <person name="Raymond C."/>
            <person name="Rouse G."/>
            <person name="Saenphimmachak C."/>
            <person name="Sehra H.K."/>
            <person name="Sheridan E."/>
            <person name="Shownkeen R."/>
            <person name="Sims S."/>
            <person name="Skuce C.D."/>
            <person name="Smith M."/>
            <person name="Steward C."/>
            <person name="Subramanian S."/>
            <person name="Sycamore N."/>
            <person name="Tracey A."/>
            <person name="Tromans A."/>
            <person name="Van Helmond Z."/>
            <person name="Wall M."/>
            <person name="Wallis J.M."/>
            <person name="White S."/>
            <person name="Whitehead S.L."/>
            <person name="Wilkinson J.E."/>
            <person name="Willey D.L."/>
            <person name="Williams H."/>
            <person name="Wilming L."/>
            <person name="Wray P.W."/>
            <person name="Wu Z."/>
            <person name="Coulson A."/>
            <person name="Vaudin M."/>
            <person name="Sulston J.E."/>
            <person name="Durbin R.M."/>
            <person name="Hubbard T."/>
            <person name="Wooster R."/>
            <person name="Dunham I."/>
            <person name="Carter N.P."/>
            <person name="McVean G."/>
            <person name="Ross M.T."/>
            <person name="Harrow J."/>
            <person name="Olson M.V."/>
            <person name="Beck S."/>
            <person name="Rogers J."/>
            <person name="Bentley D.R."/>
        </authorList>
    </citation>
    <scope>NUCLEOTIDE SEQUENCE [LARGE SCALE GENOMIC DNA]</scope>
</reference>
<reference key="6">
    <citation type="submission" date="2005-09" db="EMBL/GenBank/DDBJ databases">
        <authorList>
            <person name="Mural R.J."/>
            <person name="Istrail S."/>
            <person name="Sutton G.G."/>
            <person name="Florea L."/>
            <person name="Halpern A.L."/>
            <person name="Mobarry C.M."/>
            <person name="Lippert R."/>
            <person name="Walenz B."/>
            <person name="Shatkay H."/>
            <person name="Dew I."/>
            <person name="Miller J.R."/>
            <person name="Flanigan M.J."/>
            <person name="Edwards N.J."/>
            <person name="Bolanos R."/>
            <person name="Fasulo D."/>
            <person name="Halldorsson B.V."/>
            <person name="Hannenhalli S."/>
            <person name="Turner R."/>
            <person name="Yooseph S."/>
            <person name="Lu F."/>
            <person name="Nusskern D.R."/>
            <person name="Shue B.C."/>
            <person name="Zheng X.H."/>
            <person name="Zhong F."/>
            <person name="Delcher A.L."/>
            <person name="Huson D.H."/>
            <person name="Kravitz S.A."/>
            <person name="Mouchard L."/>
            <person name="Reinert K."/>
            <person name="Remington K.A."/>
            <person name="Clark A.G."/>
            <person name="Waterman M.S."/>
            <person name="Eichler E.E."/>
            <person name="Adams M.D."/>
            <person name="Hunkapiller M.W."/>
            <person name="Myers E.W."/>
            <person name="Venter J.C."/>
        </authorList>
    </citation>
    <scope>NUCLEOTIDE SEQUENCE [LARGE SCALE GENOMIC DNA]</scope>
</reference>
<reference key="7">
    <citation type="journal article" date="2004" name="Genome Res.">
        <title>The status, quality, and expansion of the NIH full-length cDNA project: the Mammalian Gene Collection (MGC).</title>
        <authorList>
            <consortium name="The MGC Project Team"/>
        </authorList>
    </citation>
    <scope>NUCLEOTIDE SEQUENCE [LARGE SCALE MRNA] (ISOFORM 5)</scope>
    <source>
        <tissue>Lymph</tissue>
    </source>
</reference>
<reference key="8">
    <citation type="journal article" date="2006" name="Cell">
        <title>Global, in vivo, and site-specific phosphorylation dynamics in signaling networks.</title>
        <authorList>
            <person name="Olsen J.V."/>
            <person name="Blagoev B."/>
            <person name="Gnad F."/>
            <person name="Macek B."/>
            <person name="Kumar C."/>
            <person name="Mortensen P."/>
            <person name="Mann M."/>
        </authorList>
    </citation>
    <scope>IDENTIFICATION BY MASS SPECTROMETRY [LARGE SCALE ANALYSIS]</scope>
    <source>
        <tissue>Cervix carcinoma</tissue>
    </source>
</reference>
<reference key="9">
    <citation type="journal article" date="2009" name="Anal. Chem.">
        <title>Lys-N and trypsin cover complementary parts of the phosphoproteome in a refined SCX-based approach.</title>
        <authorList>
            <person name="Gauci S."/>
            <person name="Helbig A.O."/>
            <person name="Slijper M."/>
            <person name="Krijgsveld J."/>
            <person name="Heck A.J."/>
            <person name="Mohammed S."/>
        </authorList>
    </citation>
    <scope>ACETYLATION [LARGE SCALE ANALYSIS] AT ALA-2</scope>
    <scope>CLEAVAGE OF INITIATOR METHIONINE [LARGE SCALE ANALYSIS]</scope>
    <scope>IDENTIFICATION BY MASS SPECTROMETRY [LARGE SCALE ANALYSIS]</scope>
</reference>
<reference key="10">
    <citation type="journal article" date="2010" name="Exp. Cell Res.">
        <title>OSBP-related protein 11 (ORP11) dimerizes with ORP9 and localizes at the Golgi-late endosome interface.</title>
        <authorList>
            <person name="Zhou Y."/>
            <person name="Li S."/>
            <person name="Mayranpaa M.I."/>
            <person name="Zhong W."/>
            <person name="Back N."/>
            <person name="Yan D."/>
            <person name="Olkkonen V.M."/>
        </authorList>
    </citation>
    <scope>SUBUNIT</scope>
    <scope>SUBCELLULAR LOCATION</scope>
</reference>
<reference key="11">
    <citation type="journal article" date="2011" name="BMC Syst. Biol.">
        <title>Initial characterization of the human central proteome.</title>
        <authorList>
            <person name="Burkard T.R."/>
            <person name="Planyavsky M."/>
            <person name="Kaupe I."/>
            <person name="Breitwieser F.P."/>
            <person name="Buerckstuemmer T."/>
            <person name="Bennett K.L."/>
            <person name="Superti-Furga G."/>
            <person name="Colinge J."/>
        </authorList>
    </citation>
    <scope>IDENTIFICATION BY MASS SPECTROMETRY [LARGE SCALE ANALYSIS]</scope>
</reference>
<reference key="12">
    <citation type="journal article" date="2012" name="Biochim. Biophys. Acta">
        <title>ORP10, a cholesterol binding protein associated with microtubules, regulates apolipoprotein B-100 secretion.</title>
        <authorList>
            <person name="Nissila E."/>
            <person name="Ohsaki Y."/>
            <person name="Weber-Boyvat M."/>
            <person name="Perttila J."/>
            <person name="Ikonen E."/>
            <person name="Olkkonen V.M."/>
        </authorList>
    </citation>
    <scope>INTERACTION WITH OSBPL10</scope>
</reference>
<reference key="13">
    <citation type="journal article" date="2012" name="Mol. Cell. Proteomics">
        <title>Comparative large-scale characterisation of plant vs. mammal proteins reveals similar and idiosyncratic N-alpha acetylation features.</title>
        <authorList>
            <person name="Bienvenut W.V."/>
            <person name="Sumpton D."/>
            <person name="Martinez A."/>
            <person name="Lilla S."/>
            <person name="Espagne C."/>
            <person name="Meinnel T."/>
            <person name="Giglione C."/>
        </authorList>
    </citation>
    <scope>ACETYLATION [LARGE SCALE ANALYSIS] AT ALA-2</scope>
    <scope>CLEAVAGE OF INITIATOR METHIONINE [LARGE SCALE ANALYSIS]</scope>
    <scope>IDENTIFICATION BY MASS SPECTROMETRY [LARGE SCALE ANALYSIS]</scope>
</reference>
<reference key="14">
    <citation type="journal article" date="2013" name="J. Proteome Res.">
        <title>Toward a comprehensive characterization of a human cancer cell phosphoproteome.</title>
        <authorList>
            <person name="Zhou H."/>
            <person name="Di Palma S."/>
            <person name="Preisinger C."/>
            <person name="Peng M."/>
            <person name="Polat A.N."/>
            <person name="Heck A.J."/>
            <person name="Mohammed S."/>
        </authorList>
    </citation>
    <scope>PHOSPHORYLATION [LARGE SCALE ANALYSIS] AT SER-324; SER-325; SER-326; SER-329 AND SER-611</scope>
    <scope>IDENTIFICATION BY MASS SPECTROMETRY [LARGE SCALE ANALYSIS]</scope>
    <source>
        <tissue>Cervix carcinoma</tissue>
        <tissue>Erythroleukemia</tissue>
    </source>
</reference>
<reference key="15">
    <citation type="journal article" date="2014" name="J. Proteomics">
        <title>An enzyme assisted RP-RPLC approach for in-depth analysis of human liver phosphoproteome.</title>
        <authorList>
            <person name="Bian Y."/>
            <person name="Song C."/>
            <person name="Cheng K."/>
            <person name="Dong M."/>
            <person name="Wang F."/>
            <person name="Huang J."/>
            <person name="Sun D."/>
            <person name="Wang L."/>
            <person name="Ye M."/>
            <person name="Zou H."/>
        </authorList>
    </citation>
    <scope>PHOSPHORYLATION [LARGE SCALE ANALYSIS] AT SER-306</scope>
    <scope>IDENTIFICATION BY MASS SPECTROMETRY [LARGE SCALE ANALYSIS]</scope>
    <source>
        <tissue>Liver</tissue>
    </source>
</reference>
<reference key="16">
    <citation type="journal article" date="2024" name="Elife">
        <title>The ORP9-ORP11 dimer promotes sphingomyelin synthesis.</title>
        <authorList>
            <person name="Cabukusta B."/>
            <person name="Borst Pauwels S."/>
            <person name="Akkermans J.J.L.L."/>
            <person name="Blomberg N."/>
            <person name="Mulder A.A."/>
            <person name="Koning R.I."/>
            <person name="Giera M."/>
            <person name="Neefjes J."/>
        </authorList>
    </citation>
    <scope>FUNCTION</scope>
    <scope>TRANSPORTER ACTIVITY</scope>
    <scope>SUBUNIT</scope>
</reference>
<reference key="17">
    <citation type="journal article" date="2012" name="N. Engl. J. Med.">
        <title>Diagnostic exome sequencing in persons with severe intellectual disability.</title>
        <authorList>
            <person name="de Ligt J."/>
            <person name="Willemsen M.H."/>
            <person name="van Bon B.W."/>
            <person name="Kleefstra T."/>
            <person name="Yntema H.G."/>
            <person name="Kroes T."/>
            <person name="Vulto-van Silfhout A.T."/>
            <person name="Koolen D.A."/>
            <person name="de Vries P."/>
            <person name="Gilissen C."/>
            <person name="del Rosario M."/>
            <person name="Hoischen A."/>
            <person name="Scheffer H."/>
            <person name="de Vries B.B."/>
            <person name="Brunner H.G."/>
            <person name="Veltman J.A."/>
            <person name="Vissers L.E."/>
        </authorList>
    </citation>
    <scope>VARIANT LEU-266</scope>
</reference>
<organism>
    <name type="scientific">Homo sapiens</name>
    <name type="common">Human</name>
    <dbReference type="NCBI Taxonomy" id="9606"/>
    <lineage>
        <taxon>Eukaryota</taxon>
        <taxon>Metazoa</taxon>
        <taxon>Chordata</taxon>
        <taxon>Craniata</taxon>
        <taxon>Vertebrata</taxon>
        <taxon>Euteleostomi</taxon>
        <taxon>Mammalia</taxon>
        <taxon>Eutheria</taxon>
        <taxon>Euarchontoglires</taxon>
        <taxon>Primates</taxon>
        <taxon>Haplorrhini</taxon>
        <taxon>Catarrhini</taxon>
        <taxon>Hominidae</taxon>
        <taxon>Homo</taxon>
    </lineage>
</organism>
<sequence length="736" mass="83185">MASIMEGPLSKWTNVMKGWQYRWFVLDYNAGLLSYYTSKDKMMRGSRRGCVRLRGAVIGIDDEDDSTFTITVDQKTFHFQARDADEREKWIHALEETILRHTLQLQGLDSGFVPSVQDFDKKLTEADAYLQILIEQLKLFDDKLQNCKEDEQRKKIETLKETTNSMVESIKHCIVLLQIAKDQSNAEKHADGMISTINPVDAIYQPSPLEPVISTMPSQTVLPPEPVQLCKSEQRPSSLPVGPVLATLGHHQTPTPNSTGSGHSPPSSSLTSPSHVNLSPNTVPEFSYSSSEDEFYDADEFHQSGSSPKRLIDSSGSASVLTHSSSGNSLKRPDTTESLNSSLSNGTSDADLFDSHDDRDDDAEAGSVEEHKSVIMHLLSQVRLGMDLTKVVLPTFILERRSLLEMYADFFAHPDLFVSISDQKDPKDRMVQVVKWYLSAFHAGRKGSVAKKPYNPILGEIFQCHWTLPNDTEENTELVSEGPVPWVSKNSVTFVAEQVSHHPPISAFYAECFNKKIQFNAHIWTKSKFLGMSIGVHNIGQGCVSCLDYDEHYILTFPNGYGRSILTVPWVELGGECNINCSKTGYSANIIFHTKPFYGGKKHRITAEIFSPNDKKSFCSIEGEWNGVMYAKYATGENTVFVDTKKLPIIKKKVRKLEDQNEYESRSLWKDVTFNLKIRDIDAATEAKHRLEERQRAEARERKEKEIQWETRLFHEDGECWVYDEPLLKRLGAAKH</sequence>
<protein>
    <recommendedName>
        <fullName>Oxysterol-binding protein-related protein 9</fullName>
        <shortName>ORP-9</shortName>
        <shortName>OSBP-related protein 9</shortName>
    </recommendedName>
</protein>
<proteinExistence type="evidence at protein level"/>
<keyword id="KW-0007">Acetylation</keyword>
<keyword id="KW-0025">Alternative splicing</keyword>
<keyword id="KW-0967">Endosome</keyword>
<keyword id="KW-0333">Golgi apparatus</keyword>
<keyword id="KW-0445">Lipid transport</keyword>
<keyword id="KW-0446">Lipid-binding</keyword>
<keyword id="KW-0472">Membrane</keyword>
<keyword id="KW-0597">Phosphoprotein</keyword>
<keyword id="KW-1267">Proteomics identification</keyword>
<keyword id="KW-1185">Reference proteome</keyword>
<keyword id="KW-0813">Transport</keyword>